<gene>
    <name evidence="1" type="primary">orn</name>
    <name type="ordered locus">XC_1950</name>
</gene>
<accession>Q4UVB0</accession>
<sequence>MADNVAGNDRLIWIDLEMTGLDTDRDSIIEIATIVTDAQLNVLAEGPELAIAHSLETLEAMDEWNRNQHRRSGLWQRVLDSQVTHAQAEAQTVAFLSEWIRAGASPMCGNSICQDRRFLHRQMSRLERYFHYRNLDVSTIKELARRWAPAVASGFAKSSAHTALSDVRDSIDELRHYRQFMGTLGGDNGGGVQN</sequence>
<protein>
    <recommendedName>
        <fullName evidence="1">Oligoribonuclease</fullName>
        <ecNumber evidence="1">3.1.15.-</ecNumber>
    </recommendedName>
</protein>
<comment type="function">
    <text evidence="1">3'-to-5' exoribonuclease specific for small oligoribonucleotides.</text>
</comment>
<comment type="subcellular location">
    <subcellularLocation>
        <location evidence="1">Cytoplasm</location>
    </subcellularLocation>
</comment>
<comment type="similarity">
    <text evidence="1">Belongs to the oligoribonuclease family.</text>
</comment>
<reference key="1">
    <citation type="journal article" date="2005" name="Genome Res.">
        <title>Comparative and functional genomic analyses of the pathogenicity of phytopathogen Xanthomonas campestris pv. campestris.</title>
        <authorList>
            <person name="Qian W."/>
            <person name="Jia Y."/>
            <person name="Ren S.-X."/>
            <person name="He Y.-Q."/>
            <person name="Feng J.-X."/>
            <person name="Lu L.-F."/>
            <person name="Sun Q."/>
            <person name="Ying G."/>
            <person name="Tang D.-J."/>
            <person name="Tang H."/>
            <person name="Wu W."/>
            <person name="Hao P."/>
            <person name="Wang L."/>
            <person name="Jiang B.-L."/>
            <person name="Zeng S."/>
            <person name="Gu W.-Y."/>
            <person name="Lu G."/>
            <person name="Rong L."/>
            <person name="Tian Y."/>
            <person name="Yao Z."/>
            <person name="Fu G."/>
            <person name="Chen B."/>
            <person name="Fang R."/>
            <person name="Qiang B."/>
            <person name="Chen Z."/>
            <person name="Zhao G.-P."/>
            <person name="Tang J.-L."/>
            <person name="He C."/>
        </authorList>
    </citation>
    <scope>NUCLEOTIDE SEQUENCE [LARGE SCALE GENOMIC DNA]</scope>
    <source>
        <strain>8004</strain>
    </source>
</reference>
<proteinExistence type="inferred from homology"/>
<feature type="chain" id="PRO_1000004298" description="Oligoribonuclease">
    <location>
        <begin position="1"/>
        <end position="194"/>
    </location>
</feature>
<feature type="domain" description="Exonuclease" evidence="1">
    <location>
        <begin position="11"/>
        <end position="174"/>
    </location>
</feature>
<feature type="active site" evidence="1">
    <location>
        <position position="132"/>
    </location>
</feature>
<name>ORN_XANC8</name>
<organism>
    <name type="scientific">Xanthomonas campestris pv. campestris (strain 8004)</name>
    <dbReference type="NCBI Taxonomy" id="314565"/>
    <lineage>
        <taxon>Bacteria</taxon>
        <taxon>Pseudomonadati</taxon>
        <taxon>Pseudomonadota</taxon>
        <taxon>Gammaproteobacteria</taxon>
        <taxon>Lysobacterales</taxon>
        <taxon>Lysobacteraceae</taxon>
        <taxon>Xanthomonas</taxon>
    </lineage>
</organism>
<evidence type="ECO:0000255" key="1">
    <source>
        <dbReference type="HAMAP-Rule" id="MF_00045"/>
    </source>
</evidence>
<keyword id="KW-0963">Cytoplasm</keyword>
<keyword id="KW-0269">Exonuclease</keyword>
<keyword id="KW-0378">Hydrolase</keyword>
<keyword id="KW-0540">Nuclease</keyword>
<dbReference type="EC" id="3.1.15.-" evidence="1"/>
<dbReference type="EMBL" id="CP000050">
    <property type="protein sequence ID" value="AAY49013.1"/>
    <property type="molecule type" value="Genomic_DNA"/>
</dbReference>
<dbReference type="RefSeq" id="WP_011037314.1">
    <property type="nucleotide sequence ID" value="NZ_CP155948.1"/>
</dbReference>
<dbReference type="SMR" id="Q4UVB0"/>
<dbReference type="KEGG" id="xcb:XC_1950"/>
<dbReference type="HOGENOM" id="CLU_064761_2_0_6"/>
<dbReference type="Proteomes" id="UP000000420">
    <property type="component" value="Chromosome"/>
</dbReference>
<dbReference type="GO" id="GO:0005737">
    <property type="term" value="C:cytoplasm"/>
    <property type="evidence" value="ECO:0007669"/>
    <property type="project" value="UniProtKB-SubCell"/>
</dbReference>
<dbReference type="GO" id="GO:0000175">
    <property type="term" value="F:3'-5'-RNA exonuclease activity"/>
    <property type="evidence" value="ECO:0007669"/>
    <property type="project" value="InterPro"/>
</dbReference>
<dbReference type="GO" id="GO:0003676">
    <property type="term" value="F:nucleic acid binding"/>
    <property type="evidence" value="ECO:0007669"/>
    <property type="project" value="InterPro"/>
</dbReference>
<dbReference type="GO" id="GO:0006259">
    <property type="term" value="P:DNA metabolic process"/>
    <property type="evidence" value="ECO:0007669"/>
    <property type="project" value="UniProtKB-ARBA"/>
</dbReference>
<dbReference type="CDD" id="cd06135">
    <property type="entry name" value="Orn"/>
    <property type="match status" value="1"/>
</dbReference>
<dbReference type="FunFam" id="3.30.420.10:FF:000003">
    <property type="entry name" value="Oligoribonuclease"/>
    <property type="match status" value="1"/>
</dbReference>
<dbReference type="Gene3D" id="3.30.420.10">
    <property type="entry name" value="Ribonuclease H-like superfamily/Ribonuclease H"/>
    <property type="match status" value="1"/>
</dbReference>
<dbReference type="HAMAP" id="MF_00045">
    <property type="entry name" value="Oligoribonuclease"/>
    <property type="match status" value="1"/>
</dbReference>
<dbReference type="InterPro" id="IPR013520">
    <property type="entry name" value="Exonuclease_RNaseT/DNA_pol3"/>
</dbReference>
<dbReference type="InterPro" id="IPR022894">
    <property type="entry name" value="Oligoribonuclease"/>
</dbReference>
<dbReference type="InterPro" id="IPR012337">
    <property type="entry name" value="RNaseH-like_sf"/>
</dbReference>
<dbReference type="InterPro" id="IPR036397">
    <property type="entry name" value="RNaseH_sf"/>
</dbReference>
<dbReference type="NCBIfam" id="NF003765">
    <property type="entry name" value="PRK05359.1"/>
    <property type="match status" value="1"/>
</dbReference>
<dbReference type="PANTHER" id="PTHR11046">
    <property type="entry name" value="OLIGORIBONUCLEASE, MITOCHONDRIAL"/>
    <property type="match status" value="1"/>
</dbReference>
<dbReference type="PANTHER" id="PTHR11046:SF0">
    <property type="entry name" value="OLIGORIBONUCLEASE, MITOCHONDRIAL"/>
    <property type="match status" value="1"/>
</dbReference>
<dbReference type="Pfam" id="PF00929">
    <property type="entry name" value="RNase_T"/>
    <property type="match status" value="1"/>
</dbReference>
<dbReference type="SMART" id="SM00479">
    <property type="entry name" value="EXOIII"/>
    <property type="match status" value="1"/>
</dbReference>
<dbReference type="SUPFAM" id="SSF53098">
    <property type="entry name" value="Ribonuclease H-like"/>
    <property type="match status" value="1"/>
</dbReference>